<protein>
    <recommendedName>
        <fullName evidence="4">Phylloseptin-J3</fullName>
        <shortName evidence="4">PLS-J3</shortName>
        <shortName>PS-J3</shortName>
    </recommendedName>
</protein>
<reference evidence="5" key="1">
    <citation type="journal article" date="2011" name="Toxicon">
        <title>Peptidomic dissection of the skin secretion of Phasmahyla jandaia (Bokermann and Sazima, 1978) (Anura, Hylidae, Phyllomedusinae).</title>
        <authorList>
            <person name="Rates B."/>
            <person name="Silva L.P."/>
            <person name="Ireno I.C."/>
            <person name="Leite F.S."/>
            <person name="Borges M.H."/>
            <person name="Bloch C. Jr."/>
            <person name="De Lima M.E."/>
            <person name="Pimenta A.M."/>
        </authorList>
    </citation>
    <scope>PROTEIN SEQUENCE</scope>
    <scope>SUBCELLULAR LOCATION</scope>
    <scope>TISSUE SPECIFICITY</scope>
    <scope>MASS SPECTROMETRY</scope>
    <scope>AMIDATION AT LEU-19</scope>
    <source>
        <tissue evidence="3">Skin secretion</tissue>
    </source>
</reference>
<comment type="function">
    <text evidence="1">Has antimicrobial activity.</text>
</comment>
<comment type="subcellular location">
    <subcellularLocation>
        <location evidence="3">Secreted</location>
    </subcellularLocation>
</comment>
<comment type="tissue specificity">
    <text evidence="3">Expressed by the skin glands.</text>
</comment>
<comment type="mass spectrometry"/>
<comment type="similarity">
    <text evidence="2">Belongs to the frog skin active peptide (FSAP) family. Phylloseptin subfamily.</text>
</comment>
<keyword id="KW-0027">Amidation</keyword>
<keyword id="KW-0878">Amphibian defense peptide</keyword>
<keyword id="KW-0929">Antimicrobial</keyword>
<keyword id="KW-0903">Direct protein sequencing</keyword>
<keyword id="KW-0964">Secreted</keyword>
<evidence type="ECO:0000250" key="1">
    <source>
        <dbReference type="UniProtKB" id="P84572"/>
    </source>
</evidence>
<evidence type="ECO:0000255" key="2"/>
<evidence type="ECO:0000269" key="3">
    <source>
    </source>
</evidence>
<evidence type="ECO:0000303" key="4">
    <source>
    </source>
</evidence>
<evidence type="ECO:0000305" key="5"/>
<proteinExistence type="evidence at protein level"/>
<organism>
    <name type="scientific">Phasmahyla jandaia</name>
    <name type="common">Jandaia leaf frog</name>
    <name type="synonym">Phyllomedusa jandaia</name>
    <dbReference type="NCBI Taxonomy" id="762504"/>
    <lineage>
        <taxon>Eukaryota</taxon>
        <taxon>Metazoa</taxon>
        <taxon>Chordata</taxon>
        <taxon>Craniata</taxon>
        <taxon>Vertebrata</taxon>
        <taxon>Euteleostomi</taxon>
        <taxon>Amphibia</taxon>
        <taxon>Batrachia</taxon>
        <taxon>Anura</taxon>
        <taxon>Neobatrachia</taxon>
        <taxon>Hyloidea</taxon>
        <taxon>Hylidae</taxon>
        <taxon>Phyllomedusinae</taxon>
        <taxon>Phasmahyla</taxon>
    </lineage>
</organism>
<dbReference type="GO" id="GO:0005576">
    <property type="term" value="C:extracellular region"/>
    <property type="evidence" value="ECO:0007669"/>
    <property type="project" value="UniProtKB-SubCell"/>
</dbReference>
<dbReference type="GO" id="GO:0006952">
    <property type="term" value="P:defense response"/>
    <property type="evidence" value="ECO:0007669"/>
    <property type="project" value="UniProtKB-KW"/>
</dbReference>
<feature type="peptide" id="PRO_0000404622" description="Phylloseptin-J3" evidence="1 5">
    <location>
        <begin position="1"/>
        <end position="19"/>
    </location>
</feature>
<feature type="modified residue" description="Leucine amide" evidence="3">
    <location>
        <position position="19"/>
    </location>
</feature>
<feature type="unsure residue" description="L or I" evidence="3">
    <location>
        <position position="2"/>
    </location>
</feature>
<feature type="unsure residue" description="L or I" evidence="3">
    <location>
        <position position="4"/>
    </location>
</feature>
<feature type="unsure residue" description="I or L" evidence="3">
    <location>
        <position position="5"/>
    </location>
</feature>
<feature type="unsure residue" description="I or L" evidence="3">
    <location>
        <position position="9"/>
    </location>
</feature>
<feature type="unsure residue" description="I or L" evidence="3">
    <location>
        <position position="12"/>
    </location>
</feature>
<feature type="unsure residue" description="I or L" evidence="3">
    <location>
        <position position="15"/>
    </location>
</feature>
<feature type="unsure residue" description="L or I" evidence="3">
    <location>
        <position position="19"/>
    </location>
</feature>
<sequence>FLSLIPHAINAISAIANHL</sequence>
<accession>P86616</accession>
<name>PLS3_PHAJA</name>